<sequence length="67" mass="7879">MSLFPVIVVFGLSFPPIFFELLLSLAIFWLVRRMLVPTGIYDFVWHPALFNTALYCCLFYLISRLFV</sequence>
<organism>
    <name type="scientific">Salmonella agona (strain SL483)</name>
    <dbReference type="NCBI Taxonomy" id="454166"/>
    <lineage>
        <taxon>Bacteria</taxon>
        <taxon>Pseudomonadati</taxon>
        <taxon>Pseudomonadota</taxon>
        <taxon>Gammaproteobacteria</taxon>
        <taxon>Enterobacterales</taxon>
        <taxon>Enterobacteriaceae</taxon>
        <taxon>Salmonella</taxon>
    </lineage>
</organism>
<evidence type="ECO:0000255" key="1">
    <source>
        <dbReference type="HAMAP-Rule" id="MF_01546"/>
    </source>
</evidence>
<proteinExistence type="inferred from homology"/>
<feature type="chain" id="PRO_1000146759" description="Protein AaeX">
    <location>
        <begin position="1"/>
        <end position="67"/>
    </location>
</feature>
<feature type="transmembrane region" description="Helical" evidence="1">
    <location>
        <begin position="3"/>
        <end position="23"/>
    </location>
</feature>
<feature type="transmembrane region" description="Helical" evidence="1">
    <location>
        <begin position="43"/>
        <end position="63"/>
    </location>
</feature>
<comment type="subcellular location">
    <subcellularLocation>
        <location evidence="1">Cell membrane</location>
        <topology evidence="1">Multi-pass membrane protein</topology>
    </subcellularLocation>
</comment>
<comment type="similarity">
    <text evidence="1">Belongs to the AaeX family.</text>
</comment>
<reference key="1">
    <citation type="journal article" date="2011" name="J. Bacteriol.">
        <title>Comparative genomics of 28 Salmonella enterica isolates: evidence for CRISPR-mediated adaptive sublineage evolution.</title>
        <authorList>
            <person name="Fricke W.F."/>
            <person name="Mammel M.K."/>
            <person name="McDermott P.F."/>
            <person name="Tartera C."/>
            <person name="White D.G."/>
            <person name="Leclerc J.E."/>
            <person name="Ravel J."/>
            <person name="Cebula T.A."/>
        </authorList>
    </citation>
    <scope>NUCLEOTIDE SEQUENCE [LARGE SCALE GENOMIC DNA]</scope>
    <source>
        <strain>SL483</strain>
    </source>
</reference>
<name>AAEX_SALA4</name>
<accession>B5F7M6</accession>
<protein>
    <recommendedName>
        <fullName evidence="1">Protein AaeX</fullName>
    </recommendedName>
</protein>
<gene>
    <name evidence="1" type="primary">aaeX</name>
    <name type="ordered locus">SeAg_B3557</name>
</gene>
<dbReference type="EMBL" id="CP001138">
    <property type="protein sequence ID" value="ACH51452.1"/>
    <property type="molecule type" value="Genomic_DNA"/>
</dbReference>
<dbReference type="RefSeq" id="WP_000051840.1">
    <property type="nucleotide sequence ID" value="NC_011149.1"/>
</dbReference>
<dbReference type="SMR" id="B5F7M6"/>
<dbReference type="GeneID" id="45138179"/>
<dbReference type="KEGG" id="sea:SeAg_B3557"/>
<dbReference type="HOGENOM" id="CLU_188292_0_0_6"/>
<dbReference type="Proteomes" id="UP000008819">
    <property type="component" value="Chromosome"/>
</dbReference>
<dbReference type="GO" id="GO:0005886">
    <property type="term" value="C:plasma membrane"/>
    <property type="evidence" value="ECO:0007669"/>
    <property type="project" value="UniProtKB-SubCell"/>
</dbReference>
<dbReference type="HAMAP" id="MF_01546">
    <property type="entry name" value="AaeX"/>
    <property type="match status" value="1"/>
</dbReference>
<dbReference type="InterPro" id="IPR012451">
    <property type="entry name" value="DUF1656"/>
</dbReference>
<dbReference type="NCBIfam" id="NF008615">
    <property type="entry name" value="PRK11594.1"/>
    <property type="match status" value="1"/>
</dbReference>
<dbReference type="Pfam" id="PF07869">
    <property type="entry name" value="DUF1656"/>
    <property type="match status" value="1"/>
</dbReference>
<keyword id="KW-1003">Cell membrane</keyword>
<keyword id="KW-0472">Membrane</keyword>
<keyword id="KW-0812">Transmembrane</keyword>
<keyword id="KW-1133">Transmembrane helix</keyword>